<protein>
    <recommendedName>
        <fullName evidence="1">Undecaprenyl-diphosphatase</fullName>
        <ecNumber evidence="1">3.6.1.27</ecNumber>
    </recommendedName>
    <alternativeName>
        <fullName evidence="1">Bacitracin resistance protein</fullName>
    </alternativeName>
    <alternativeName>
        <fullName evidence="1">Undecaprenyl pyrophosphate phosphatase</fullName>
    </alternativeName>
</protein>
<comment type="function">
    <text evidence="1">Catalyzes the dephosphorylation of undecaprenyl diphosphate (UPP). Confers resistance to bacitracin.</text>
</comment>
<comment type="catalytic activity">
    <reaction evidence="1">
        <text>di-trans,octa-cis-undecaprenyl diphosphate + H2O = di-trans,octa-cis-undecaprenyl phosphate + phosphate + H(+)</text>
        <dbReference type="Rhea" id="RHEA:28094"/>
        <dbReference type="ChEBI" id="CHEBI:15377"/>
        <dbReference type="ChEBI" id="CHEBI:15378"/>
        <dbReference type="ChEBI" id="CHEBI:43474"/>
        <dbReference type="ChEBI" id="CHEBI:58405"/>
        <dbReference type="ChEBI" id="CHEBI:60392"/>
        <dbReference type="EC" id="3.6.1.27"/>
    </reaction>
</comment>
<comment type="subcellular location">
    <subcellularLocation>
        <location evidence="1">Cell inner membrane</location>
        <topology evidence="1">Multi-pass membrane protein</topology>
    </subcellularLocation>
</comment>
<comment type="miscellaneous">
    <text>Bacitracin is thought to be involved in the inhibition of peptidoglycan synthesis by sequestering undecaprenyl diphosphate, thereby reducing the pool of lipid carrier available.</text>
</comment>
<comment type="similarity">
    <text evidence="1">Belongs to the UppP family.</text>
</comment>
<sequence>MDFWTAFQAIILGVVEGLTEFLPISSTGHQIIVADLIGFGGERAMAFNIIIQLAAILAVVWEFRSKIFEVVFGLTHQPKARRFTGNLLLAFMPAVVLGVLFADLIHEYLFNPVTVAAALVVGGVIMLWAERRKHRVEVDHVDDMRWSHALKIGFIQCLAMIPGTSRSGSTIIGGLLFGLSRKAATEFSFFLAMPTMVGAAVYSGYKYRDLFQPGDLPVFALGFVTSFIFAMIAVRALLKFIANHSYAAFAWYRIVFGLFILATWQFGWVDWSTAHG</sequence>
<reference key="1">
    <citation type="submission" date="2007-05" db="EMBL/GenBank/DDBJ databases">
        <title>Complete sequence of Pseudomonas putida F1.</title>
        <authorList>
            <consortium name="US DOE Joint Genome Institute"/>
            <person name="Copeland A."/>
            <person name="Lucas S."/>
            <person name="Lapidus A."/>
            <person name="Barry K."/>
            <person name="Detter J.C."/>
            <person name="Glavina del Rio T."/>
            <person name="Hammon N."/>
            <person name="Israni S."/>
            <person name="Dalin E."/>
            <person name="Tice H."/>
            <person name="Pitluck S."/>
            <person name="Chain P."/>
            <person name="Malfatti S."/>
            <person name="Shin M."/>
            <person name="Vergez L."/>
            <person name="Schmutz J."/>
            <person name="Larimer F."/>
            <person name="Land M."/>
            <person name="Hauser L."/>
            <person name="Kyrpides N."/>
            <person name="Lykidis A."/>
            <person name="Parales R."/>
            <person name="Richardson P."/>
        </authorList>
    </citation>
    <scope>NUCLEOTIDE SEQUENCE [LARGE SCALE GENOMIC DNA]</scope>
    <source>
        <strain>ATCC 700007 / DSM 6899 / JCM 31910 / BCRC 17059 / LMG 24140 / F1</strain>
    </source>
</reference>
<name>UPPP_PSEP1</name>
<evidence type="ECO:0000255" key="1">
    <source>
        <dbReference type="HAMAP-Rule" id="MF_01006"/>
    </source>
</evidence>
<accession>A5W499</accession>
<proteinExistence type="inferred from homology"/>
<keyword id="KW-0046">Antibiotic resistance</keyword>
<keyword id="KW-0997">Cell inner membrane</keyword>
<keyword id="KW-1003">Cell membrane</keyword>
<keyword id="KW-0133">Cell shape</keyword>
<keyword id="KW-0961">Cell wall biogenesis/degradation</keyword>
<keyword id="KW-0378">Hydrolase</keyword>
<keyword id="KW-0472">Membrane</keyword>
<keyword id="KW-0573">Peptidoglycan synthesis</keyword>
<keyword id="KW-0812">Transmembrane</keyword>
<keyword id="KW-1133">Transmembrane helix</keyword>
<dbReference type="EC" id="3.6.1.27" evidence="1"/>
<dbReference type="EMBL" id="CP000712">
    <property type="protein sequence ID" value="ABQ78959.1"/>
    <property type="molecule type" value="Genomic_DNA"/>
</dbReference>
<dbReference type="SMR" id="A5W499"/>
<dbReference type="KEGG" id="ppf:Pput_2827"/>
<dbReference type="eggNOG" id="COG1968">
    <property type="taxonomic scope" value="Bacteria"/>
</dbReference>
<dbReference type="HOGENOM" id="CLU_060296_2_0_6"/>
<dbReference type="GO" id="GO:0005886">
    <property type="term" value="C:plasma membrane"/>
    <property type="evidence" value="ECO:0007669"/>
    <property type="project" value="UniProtKB-SubCell"/>
</dbReference>
<dbReference type="GO" id="GO:0050380">
    <property type="term" value="F:undecaprenyl-diphosphatase activity"/>
    <property type="evidence" value="ECO:0007669"/>
    <property type="project" value="UniProtKB-UniRule"/>
</dbReference>
<dbReference type="GO" id="GO:0071555">
    <property type="term" value="P:cell wall organization"/>
    <property type="evidence" value="ECO:0007669"/>
    <property type="project" value="UniProtKB-KW"/>
</dbReference>
<dbReference type="GO" id="GO:0009252">
    <property type="term" value="P:peptidoglycan biosynthetic process"/>
    <property type="evidence" value="ECO:0007669"/>
    <property type="project" value="UniProtKB-KW"/>
</dbReference>
<dbReference type="GO" id="GO:0008360">
    <property type="term" value="P:regulation of cell shape"/>
    <property type="evidence" value="ECO:0007669"/>
    <property type="project" value="UniProtKB-KW"/>
</dbReference>
<dbReference type="GO" id="GO:0046677">
    <property type="term" value="P:response to antibiotic"/>
    <property type="evidence" value="ECO:0007669"/>
    <property type="project" value="UniProtKB-UniRule"/>
</dbReference>
<dbReference type="HAMAP" id="MF_01006">
    <property type="entry name" value="Undec_diphosphatase"/>
    <property type="match status" value="1"/>
</dbReference>
<dbReference type="InterPro" id="IPR003824">
    <property type="entry name" value="UppP"/>
</dbReference>
<dbReference type="NCBIfam" id="NF001389">
    <property type="entry name" value="PRK00281.1-2"/>
    <property type="match status" value="1"/>
</dbReference>
<dbReference type="NCBIfam" id="NF001390">
    <property type="entry name" value="PRK00281.1-4"/>
    <property type="match status" value="1"/>
</dbReference>
<dbReference type="NCBIfam" id="TIGR00753">
    <property type="entry name" value="undec_PP_bacA"/>
    <property type="match status" value="1"/>
</dbReference>
<dbReference type="PANTHER" id="PTHR30622">
    <property type="entry name" value="UNDECAPRENYL-DIPHOSPHATASE"/>
    <property type="match status" value="1"/>
</dbReference>
<dbReference type="PANTHER" id="PTHR30622:SF3">
    <property type="entry name" value="UNDECAPRENYL-DIPHOSPHATASE"/>
    <property type="match status" value="1"/>
</dbReference>
<dbReference type="Pfam" id="PF02673">
    <property type="entry name" value="BacA"/>
    <property type="match status" value="1"/>
</dbReference>
<feature type="chain" id="PRO_1000062809" description="Undecaprenyl-diphosphatase">
    <location>
        <begin position="1"/>
        <end position="276"/>
    </location>
</feature>
<feature type="transmembrane region" description="Helical" evidence="1">
    <location>
        <begin position="43"/>
        <end position="63"/>
    </location>
</feature>
<feature type="transmembrane region" description="Helical" evidence="1">
    <location>
        <begin position="85"/>
        <end position="105"/>
    </location>
</feature>
<feature type="transmembrane region" description="Helical" evidence="1">
    <location>
        <begin position="109"/>
        <end position="129"/>
    </location>
</feature>
<feature type="transmembrane region" description="Helical" evidence="1">
    <location>
        <begin position="183"/>
        <end position="203"/>
    </location>
</feature>
<feature type="transmembrane region" description="Helical" evidence="1">
    <location>
        <begin position="214"/>
        <end position="234"/>
    </location>
</feature>
<feature type="transmembrane region" description="Helical" evidence="1">
    <location>
        <begin position="249"/>
        <end position="269"/>
    </location>
</feature>
<organism>
    <name type="scientific">Pseudomonas putida (strain ATCC 700007 / DSM 6899 / JCM 31910 / BCRC 17059 / LMG 24140 / F1)</name>
    <dbReference type="NCBI Taxonomy" id="351746"/>
    <lineage>
        <taxon>Bacteria</taxon>
        <taxon>Pseudomonadati</taxon>
        <taxon>Pseudomonadota</taxon>
        <taxon>Gammaproteobacteria</taxon>
        <taxon>Pseudomonadales</taxon>
        <taxon>Pseudomonadaceae</taxon>
        <taxon>Pseudomonas</taxon>
    </lineage>
</organism>
<gene>
    <name evidence="1" type="primary">uppP</name>
    <name type="ordered locus">Pput_2827</name>
</gene>